<dbReference type="EC" id="5.4.2.11" evidence="1"/>
<dbReference type="EMBL" id="AE017194">
    <property type="protein sequence ID" value="AAS41437.1"/>
    <property type="molecule type" value="Genomic_DNA"/>
</dbReference>
<dbReference type="SMR" id="Q737X5"/>
<dbReference type="KEGG" id="bca:BCE_2520"/>
<dbReference type="HOGENOM" id="CLU_033323_1_1_9"/>
<dbReference type="UniPathway" id="UPA00109">
    <property type="reaction ID" value="UER00186"/>
</dbReference>
<dbReference type="Proteomes" id="UP000002527">
    <property type="component" value="Chromosome"/>
</dbReference>
<dbReference type="GO" id="GO:0004619">
    <property type="term" value="F:phosphoglycerate mutase activity"/>
    <property type="evidence" value="ECO:0007669"/>
    <property type="project" value="UniProtKB-EC"/>
</dbReference>
<dbReference type="GO" id="GO:0006094">
    <property type="term" value="P:gluconeogenesis"/>
    <property type="evidence" value="ECO:0007669"/>
    <property type="project" value="UniProtKB-UniRule"/>
</dbReference>
<dbReference type="GO" id="GO:0006096">
    <property type="term" value="P:glycolytic process"/>
    <property type="evidence" value="ECO:0007669"/>
    <property type="project" value="UniProtKB-UniRule"/>
</dbReference>
<dbReference type="CDD" id="cd07067">
    <property type="entry name" value="HP_PGM_like"/>
    <property type="match status" value="1"/>
</dbReference>
<dbReference type="FunFam" id="3.40.50.1240:FF:000003">
    <property type="entry name" value="2,3-bisphosphoglycerate-dependent phosphoglycerate mutase"/>
    <property type="match status" value="1"/>
</dbReference>
<dbReference type="Gene3D" id="3.40.50.1240">
    <property type="entry name" value="Phosphoglycerate mutase-like"/>
    <property type="match status" value="1"/>
</dbReference>
<dbReference type="HAMAP" id="MF_01039">
    <property type="entry name" value="PGAM_GpmA"/>
    <property type="match status" value="1"/>
</dbReference>
<dbReference type="InterPro" id="IPR013078">
    <property type="entry name" value="His_Pase_superF_clade-1"/>
</dbReference>
<dbReference type="InterPro" id="IPR029033">
    <property type="entry name" value="His_PPase_superfam"/>
</dbReference>
<dbReference type="InterPro" id="IPR001345">
    <property type="entry name" value="PG/BPGM_mutase_AS"/>
</dbReference>
<dbReference type="InterPro" id="IPR005952">
    <property type="entry name" value="Phosphogly_mut1"/>
</dbReference>
<dbReference type="NCBIfam" id="TIGR01258">
    <property type="entry name" value="pgm_1"/>
    <property type="match status" value="1"/>
</dbReference>
<dbReference type="NCBIfam" id="NF010713">
    <property type="entry name" value="PRK14115.1"/>
    <property type="match status" value="1"/>
</dbReference>
<dbReference type="PANTHER" id="PTHR11931">
    <property type="entry name" value="PHOSPHOGLYCERATE MUTASE"/>
    <property type="match status" value="1"/>
</dbReference>
<dbReference type="Pfam" id="PF00300">
    <property type="entry name" value="His_Phos_1"/>
    <property type="match status" value="1"/>
</dbReference>
<dbReference type="PIRSF" id="PIRSF000709">
    <property type="entry name" value="6PFK_2-Ptase"/>
    <property type="match status" value="1"/>
</dbReference>
<dbReference type="SMART" id="SM00855">
    <property type="entry name" value="PGAM"/>
    <property type="match status" value="1"/>
</dbReference>
<dbReference type="SUPFAM" id="SSF53254">
    <property type="entry name" value="Phosphoglycerate mutase-like"/>
    <property type="match status" value="1"/>
</dbReference>
<dbReference type="PROSITE" id="PS00175">
    <property type="entry name" value="PG_MUTASE"/>
    <property type="match status" value="1"/>
</dbReference>
<protein>
    <recommendedName>
        <fullName evidence="1">2,3-bisphosphoglycerate-dependent phosphoglycerate mutase 1</fullName>
        <shortName evidence="1">BPG-dependent PGAM 1</shortName>
        <shortName evidence="1">PGAM 1</shortName>
        <shortName evidence="1">Phosphoglyceromutase 1</shortName>
        <shortName evidence="1">dPGM 1</shortName>
        <ecNumber evidence="1">5.4.2.11</ecNumber>
    </recommendedName>
</protein>
<proteinExistence type="inferred from homology"/>
<sequence>MIKLVLIRHGQSLWNLENRFTGWTDVDLSENGLSEAREAGAILKKNGYTFDVAYTSVLKRAIRTLWIVLHEMDLAWIPVHKCWKLNERHYGALQGLNKDETAKKYGEEQVHIWRRSIDVRPPALTEDDPRYEMNDPRYKALKKGELPLTECLVDTEKRVLAYWHSEIAPSLKSGEKVIISSHGNTIRSLVKYLDNLSSDGVVSLNIPTSIPLVYELDDNLRPIRHYYLSMDGEVPEGEIPKHISF</sequence>
<keyword id="KW-0312">Gluconeogenesis</keyword>
<keyword id="KW-0324">Glycolysis</keyword>
<keyword id="KW-0413">Isomerase</keyword>
<accession>Q737X5</accession>
<reference key="1">
    <citation type="journal article" date="2004" name="Nucleic Acids Res.">
        <title>The genome sequence of Bacillus cereus ATCC 10987 reveals metabolic adaptations and a large plasmid related to Bacillus anthracis pXO1.</title>
        <authorList>
            <person name="Rasko D.A."/>
            <person name="Ravel J."/>
            <person name="Oekstad O.A."/>
            <person name="Helgason E."/>
            <person name="Cer R.Z."/>
            <person name="Jiang L."/>
            <person name="Shores K.A."/>
            <person name="Fouts D.E."/>
            <person name="Tourasse N.J."/>
            <person name="Angiuoli S.V."/>
            <person name="Kolonay J.F."/>
            <person name="Nelson W.C."/>
            <person name="Kolstoe A.-B."/>
            <person name="Fraser C.M."/>
            <person name="Read T.D."/>
        </authorList>
    </citation>
    <scope>NUCLEOTIDE SEQUENCE [LARGE SCALE GENOMIC DNA]</scope>
    <source>
        <strain>ATCC 10987 / NRS 248</strain>
    </source>
</reference>
<comment type="function">
    <text evidence="1">Catalyzes the interconversion of 2-phosphoglycerate and 3-phosphoglycerate.</text>
</comment>
<comment type="catalytic activity">
    <reaction evidence="1">
        <text>(2R)-2-phosphoglycerate = (2R)-3-phosphoglycerate</text>
        <dbReference type="Rhea" id="RHEA:15901"/>
        <dbReference type="ChEBI" id="CHEBI:58272"/>
        <dbReference type="ChEBI" id="CHEBI:58289"/>
        <dbReference type="EC" id="5.4.2.11"/>
    </reaction>
</comment>
<comment type="pathway">
    <text evidence="1">Carbohydrate degradation; glycolysis; pyruvate from D-glyceraldehyde 3-phosphate: step 3/5.</text>
</comment>
<comment type="similarity">
    <text evidence="1">Belongs to the phosphoglycerate mutase family. BPG-dependent PGAM subfamily.</text>
</comment>
<organism>
    <name type="scientific">Bacillus cereus (strain ATCC 10987 / NRS 248)</name>
    <dbReference type="NCBI Taxonomy" id="222523"/>
    <lineage>
        <taxon>Bacteria</taxon>
        <taxon>Bacillati</taxon>
        <taxon>Bacillota</taxon>
        <taxon>Bacilli</taxon>
        <taxon>Bacillales</taxon>
        <taxon>Bacillaceae</taxon>
        <taxon>Bacillus</taxon>
        <taxon>Bacillus cereus group</taxon>
    </lineage>
</organism>
<feature type="chain" id="PRO_0000179843" description="2,3-bisphosphoglycerate-dependent phosphoglycerate mutase 1">
    <location>
        <begin position="1"/>
        <end position="245"/>
    </location>
</feature>
<feature type="active site" description="Tele-phosphohistidine intermediate" evidence="1">
    <location>
        <position position="9"/>
    </location>
</feature>
<feature type="active site" description="Proton donor/acceptor" evidence="1">
    <location>
        <position position="87"/>
    </location>
</feature>
<feature type="binding site" evidence="1">
    <location>
        <begin position="8"/>
        <end position="15"/>
    </location>
    <ligand>
        <name>substrate</name>
    </ligand>
</feature>
<feature type="binding site" evidence="1">
    <location>
        <begin position="21"/>
        <end position="22"/>
    </location>
    <ligand>
        <name>substrate</name>
    </ligand>
</feature>
<feature type="binding site" evidence="1">
    <location>
        <position position="60"/>
    </location>
    <ligand>
        <name>substrate</name>
    </ligand>
</feature>
<feature type="binding site" evidence="1">
    <location>
        <begin position="87"/>
        <end position="90"/>
    </location>
    <ligand>
        <name>substrate</name>
    </ligand>
</feature>
<feature type="binding site" evidence="1">
    <location>
        <position position="98"/>
    </location>
    <ligand>
        <name>substrate</name>
    </ligand>
</feature>
<feature type="binding site" evidence="1">
    <location>
        <begin position="114"/>
        <end position="115"/>
    </location>
    <ligand>
        <name>substrate</name>
    </ligand>
</feature>
<feature type="binding site" evidence="1">
    <location>
        <begin position="183"/>
        <end position="184"/>
    </location>
    <ligand>
        <name>substrate</name>
    </ligand>
</feature>
<feature type="site" description="Transition state stabilizer" evidence="1">
    <location>
        <position position="182"/>
    </location>
</feature>
<evidence type="ECO:0000255" key="1">
    <source>
        <dbReference type="HAMAP-Rule" id="MF_01039"/>
    </source>
</evidence>
<gene>
    <name evidence="1" type="primary">gpmA1</name>
    <name type="synonym">gpm</name>
    <name type="ordered locus">BCE_2520</name>
</gene>
<name>GPMA1_BACC1</name>